<keyword id="KW-0687">Ribonucleoprotein</keyword>
<keyword id="KW-0689">Ribosomal protein</keyword>
<keyword id="KW-0694">RNA-binding</keyword>
<keyword id="KW-0699">rRNA-binding</keyword>
<accession>Q1IYF7</accession>
<name>RS20_DEIGD</name>
<comment type="function">
    <text evidence="1">Binds directly to 16S ribosomal RNA.</text>
</comment>
<comment type="similarity">
    <text evidence="1">Belongs to the bacterial ribosomal protein bS20 family.</text>
</comment>
<reference key="1">
    <citation type="submission" date="2006-04" db="EMBL/GenBank/DDBJ databases">
        <title>Complete sequence of chromosome of Deinococcus geothermalis DSM 11300.</title>
        <authorList>
            <person name="Copeland A."/>
            <person name="Lucas S."/>
            <person name="Lapidus A."/>
            <person name="Barry K."/>
            <person name="Detter J.C."/>
            <person name="Glavina del Rio T."/>
            <person name="Hammon N."/>
            <person name="Israni S."/>
            <person name="Dalin E."/>
            <person name="Tice H."/>
            <person name="Pitluck S."/>
            <person name="Brettin T."/>
            <person name="Bruce D."/>
            <person name="Han C."/>
            <person name="Tapia R."/>
            <person name="Saunders E."/>
            <person name="Gilna P."/>
            <person name="Schmutz J."/>
            <person name="Larimer F."/>
            <person name="Land M."/>
            <person name="Hauser L."/>
            <person name="Kyrpides N."/>
            <person name="Kim E."/>
            <person name="Daly M.J."/>
            <person name="Fredrickson J.K."/>
            <person name="Makarova K.S."/>
            <person name="Gaidamakova E.K."/>
            <person name="Zhai M."/>
            <person name="Richardson P."/>
        </authorList>
    </citation>
    <scope>NUCLEOTIDE SEQUENCE [LARGE SCALE GENOMIC DNA]</scope>
    <source>
        <strain>DSM 11300 / CIP 105573 / AG-3a</strain>
    </source>
</reference>
<sequence>MALRHKSAQKRHRQSLKRRLINRSRKNTIKTFSKKAVVAAQNGAENAVELHRKAESLIDKAAKGSTLHKNAAARKKSRLAKALNKAKAAQAAQPA</sequence>
<gene>
    <name evidence="1" type="primary">rpsT</name>
    <name type="ordered locus">Dgeo_1432</name>
</gene>
<proteinExistence type="inferred from homology"/>
<organism>
    <name type="scientific">Deinococcus geothermalis (strain DSM 11300 / CIP 105573 / AG-3a)</name>
    <dbReference type="NCBI Taxonomy" id="319795"/>
    <lineage>
        <taxon>Bacteria</taxon>
        <taxon>Thermotogati</taxon>
        <taxon>Deinococcota</taxon>
        <taxon>Deinococci</taxon>
        <taxon>Deinococcales</taxon>
        <taxon>Deinococcaceae</taxon>
        <taxon>Deinococcus</taxon>
    </lineage>
</organism>
<protein>
    <recommendedName>
        <fullName evidence="1">Small ribosomal subunit protein bS20</fullName>
    </recommendedName>
    <alternativeName>
        <fullName evidence="3">30S ribosomal protein S20</fullName>
    </alternativeName>
</protein>
<evidence type="ECO:0000255" key="1">
    <source>
        <dbReference type="HAMAP-Rule" id="MF_00500"/>
    </source>
</evidence>
<evidence type="ECO:0000256" key="2">
    <source>
        <dbReference type="SAM" id="MobiDB-lite"/>
    </source>
</evidence>
<evidence type="ECO:0000305" key="3"/>
<feature type="chain" id="PRO_0000260115" description="Small ribosomal subunit protein bS20">
    <location>
        <begin position="1"/>
        <end position="95"/>
    </location>
</feature>
<feature type="region of interest" description="Disordered" evidence="2">
    <location>
        <begin position="1"/>
        <end position="26"/>
    </location>
</feature>
<feature type="region of interest" description="Disordered" evidence="2">
    <location>
        <begin position="76"/>
        <end position="95"/>
    </location>
</feature>
<feature type="compositionally biased region" description="Low complexity" evidence="2">
    <location>
        <begin position="80"/>
        <end position="95"/>
    </location>
</feature>
<dbReference type="EMBL" id="CP000359">
    <property type="protein sequence ID" value="ABF45727.1"/>
    <property type="molecule type" value="Genomic_DNA"/>
</dbReference>
<dbReference type="RefSeq" id="WP_011530561.1">
    <property type="nucleotide sequence ID" value="NC_008025.1"/>
</dbReference>
<dbReference type="SMR" id="Q1IYF7"/>
<dbReference type="STRING" id="319795.Dgeo_1432"/>
<dbReference type="KEGG" id="dge:Dgeo_1432"/>
<dbReference type="eggNOG" id="COG0268">
    <property type="taxonomic scope" value="Bacteria"/>
</dbReference>
<dbReference type="HOGENOM" id="CLU_160655_3_1_0"/>
<dbReference type="Proteomes" id="UP000002431">
    <property type="component" value="Chromosome"/>
</dbReference>
<dbReference type="GO" id="GO:0015935">
    <property type="term" value="C:small ribosomal subunit"/>
    <property type="evidence" value="ECO:0007669"/>
    <property type="project" value="TreeGrafter"/>
</dbReference>
<dbReference type="GO" id="GO:0070181">
    <property type="term" value="F:small ribosomal subunit rRNA binding"/>
    <property type="evidence" value="ECO:0007669"/>
    <property type="project" value="TreeGrafter"/>
</dbReference>
<dbReference type="GO" id="GO:0003735">
    <property type="term" value="F:structural constituent of ribosome"/>
    <property type="evidence" value="ECO:0007669"/>
    <property type="project" value="InterPro"/>
</dbReference>
<dbReference type="GO" id="GO:0006412">
    <property type="term" value="P:translation"/>
    <property type="evidence" value="ECO:0007669"/>
    <property type="project" value="UniProtKB-UniRule"/>
</dbReference>
<dbReference type="Gene3D" id="1.20.58.110">
    <property type="entry name" value="Ribosomal protein S20"/>
    <property type="match status" value="1"/>
</dbReference>
<dbReference type="HAMAP" id="MF_00500">
    <property type="entry name" value="Ribosomal_bS20"/>
    <property type="match status" value="1"/>
</dbReference>
<dbReference type="InterPro" id="IPR002583">
    <property type="entry name" value="Ribosomal_bS20"/>
</dbReference>
<dbReference type="InterPro" id="IPR036510">
    <property type="entry name" value="Ribosomal_bS20_sf"/>
</dbReference>
<dbReference type="NCBIfam" id="TIGR00029">
    <property type="entry name" value="S20"/>
    <property type="match status" value="1"/>
</dbReference>
<dbReference type="PANTHER" id="PTHR33398">
    <property type="entry name" value="30S RIBOSOMAL PROTEIN S20"/>
    <property type="match status" value="1"/>
</dbReference>
<dbReference type="PANTHER" id="PTHR33398:SF1">
    <property type="entry name" value="SMALL RIBOSOMAL SUBUNIT PROTEIN BS20C"/>
    <property type="match status" value="1"/>
</dbReference>
<dbReference type="Pfam" id="PF01649">
    <property type="entry name" value="Ribosomal_S20p"/>
    <property type="match status" value="1"/>
</dbReference>
<dbReference type="SUPFAM" id="SSF46992">
    <property type="entry name" value="Ribosomal protein S20"/>
    <property type="match status" value="1"/>
</dbReference>